<proteinExistence type="evidence at transcript level"/>
<dbReference type="EMBL" id="U00790">
    <property type="protein sequence ID" value="AAC46465.1"/>
    <property type="molecule type" value="Unassigned_DNA"/>
</dbReference>
<dbReference type="EMBL" id="AE014296">
    <property type="protein sequence ID" value="AAF49435.1"/>
    <property type="molecule type" value="Genomic_DNA"/>
</dbReference>
<dbReference type="EMBL" id="AY051697">
    <property type="protein sequence ID" value="AAK93121.1"/>
    <property type="molecule type" value="mRNA"/>
</dbReference>
<dbReference type="RefSeq" id="NP_524115.1">
    <property type="nucleotide sequence ID" value="NM_079391.3"/>
</dbReference>
<dbReference type="SMR" id="P40304"/>
<dbReference type="BioGRID" id="65155">
    <property type="interactions" value="53"/>
</dbReference>
<dbReference type="ComplexPortal" id="CPX-9070">
    <property type="entry name" value="26S proteasome complex"/>
</dbReference>
<dbReference type="ComplexPortal" id="CPX-9087">
    <property type="entry name" value="26S proteasome complex, testis-specific variant"/>
</dbReference>
<dbReference type="DIP" id="DIP-23672N"/>
<dbReference type="FunCoup" id="P40304">
    <property type="interactions" value="1742"/>
</dbReference>
<dbReference type="IntAct" id="P40304">
    <property type="interactions" value="110"/>
</dbReference>
<dbReference type="STRING" id="7227.FBpp0075119"/>
<dbReference type="PaxDb" id="7227-FBpp0075119"/>
<dbReference type="DNASU" id="39855"/>
<dbReference type="EnsemblMetazoa" id="FBtr0075360">
    <property type="protein sequence ID" value="FBpp0075119"/>
    <property type="gene ID" value="FBgn0002284"/>
</dbReference>
<dbReference type="GeneID" id="39855"/>
<dbReference type="KEGG" id="dme:Dmel_CG4097"/>
<dbReference type="AGR" id="FB:FBgn0002284"/>
<dbReference type="CTD" id="39855"/>
<dbReference type="FlyBase" id="FBgn0002284">
    <property type="gene designation" value="Prosbeta6"/>
</dbReference>
<dbReference type="VEuPathDB" id="VectorBase:FBgn0002284"/>
<dbReference type="eggNOG" id="KOG0179">
    <property type="taxonomic scope" value="Eukaryota"/>
</dbReference>
<dbReference type="GeneTree" id="ENSGT00550000075035"/>
<dbReference type="HOGENOM" id="CLU_035750_1_1_1"/>
<dbReference type="InParanoid" id="P40304"/>
<dbReference type="OMA" id="CSGCWCD"/>
<dbReference type="OrthoDB" id="268479at2759"/>
<dbReference type="PhylomeDB" id="P40304"/>
<dbReference type="Reactome" id="R-DME-209360">
    <property type="pathway name" value="Ubiquitination and proteolysis of phosphorylated CI"/>
</dbReference>
<dbReference type="Reactome" id="R-DME-209406">
    <property type="pathway name" value="Degradation of NF-kappa-B inhibitor, CACT"/>
</dbReference>
<dbReference type="Reactome" id="R-DME-209461">
    <property type="pathway name" value="Ubiquitination and degradation of phosphorylated ARM"/>
</dbReference>
<dbReference type="Reactome" id="R-DME-216167">
    <property type="pathway name" value="Nuclear CI is degraded"/>
</dbReference>
<dbReference type="Reactome" id="R-DME-432395">
    <property type="pathway name" value="Degradation of TIM"/>
</dbReference>
<dbReference type="Reactome" id="R-DME-432524">
    <property type="pathway name" value="Degradation of PER"/>
</dbReference>
<dbReference type="Reactome" id="R-DME-432626">
    <property type="pathway name" value="Circadian Clock pathway"/>
</dbReference>
<dbReference type="Reactome" id="R-DME-538864">
    <property type="pathway name" value="Degradation of CRY"/>
</dbReference>
<dbReference type="SignaLink" id="P40304"/>
<dbReference type="BioGRID-ORCS" id="39855">
    <property type="hits" value="0 hits in 3 CRISPR screens"/>
</dbReference>
<dbReference type="GenomeRNAi" id="39855"/>
<dbReference type="PRO" id="PR:P40304"/>
<dbReference type="Proteomes" id="UP000000803">
    <property type="component" value="Chromosome 3L"/>
</dbReference>
<dbReference type="Bgee" id="FBgn0002284">
    <property type="expression patterns" value="Expressed in adult posterior midgut class II enteroendocrine cell in adult midgut (Drosophila) and 177 other cell types or tissues"/>
</dbReference>
<dbReference type="ExpressionAtlas" id="P40304">
    <property type="expression patterns" value="baseline and differential"/>
</dbReference>
<dbReference type="GO" id="GO:0005829">
    <property type="term" value="C:cytosol"/>
    <property type="evidence" value="ECO:0000318"/>
    <property type="project" value="GO_Central"/>
</dbReference>
<dbReference type="GO" id="GO:0005654">
    <property type="term" value="C:nucleoplasm"/>
    <property type="evidence" value="ECO:0000304"/>
    <property type="project" value="Reactome"/>
</dbReference>
<dbReference type="GO" id="GO:0005634">
    <property type="term" value="C:nucleus"/>
    <property type="evidence" value="ECO:0000318"/>
    <property type="project" value="GO_Central"/>
</dbReference>
<dbReference type="GO" id="GO:0000502">
    <property type="term" value="C:proteasome complex"/>
    <property type="evidence" value="ECO:0000314"/>
    <property type="project" value="FlyBase"/>
</dbReference>
<dbReference type="GO" id="GO:0005839">
    <property type="term" value="C:proteasome core complex"/>
    <property type="evidence" value="ECO:0000314"/>
    <property type="project" value="FlyBase"/>
</dbReference>
<dbReference type="GO" id="GO:0019774">
    <property type="term" value="C:proteasome core complex, beta-subunit complex"/>
    <property type="evidence" value="ECO:0000250"/>
    <property type="project" value="UniProtKB"/>
</dbReference>
<dbReference type="GO" id="GO:0043161">
    <property type="term" value="P:proteasome-mediated ubiquitin-dependent protein catabolic process"/>
    <property type="evidence" value="ECO:0000315"/>
    <property type="project" value="FlyBase"/>
</dbReference>
<dbReference type="CDD" id="cd03757">
    <property type="entry name" value="proteasome_beta_type_1"/>
    <property type="match status" value="1"/>
</dbReference>
<dbReference type="FunFam" id="3.60.20.10:FF:000027">
    <property type="entry name" value="Proteasome subunit beta type-6"/>
    <property type="match status" value="1"/>
</dbReference>
<dbReference type="Gene3D" id="3.60.20.10">
    <property type="entry name" value="Glutamine Phosphoribosylpyrophosphate, subunit 1, domain 1"/>
    <property type="match status" value="1"/>
</dbReference>
<dbReference type="InterPro" id="IPR029055">
    <property type="entry name" value="Ntn_hydrolases_N"/>
</dbReference>
<dbReference type="InterPro" id="IPR016050">
    <property type="entry name" value="Proteasome_bsu_CS"/>
</dbReference>
<dbReference type="InterPro" id="IPR001353">
    <property type="entry name" value="Proteasome_sua/b"/>
</dbReference>
<dbReference type="InterPro" id="IPR023333">
    <property type="entry name" value="Proteasome_suB-type"/>
</dbReference>
<dbReference type="PANTHER" id="PTHR32194">
    <property type="entry name" value="METALLOPROTEASE TLDD"/>
    <property type="match status" value="1"/>
</dbReference>
<dbReference type="PANTHER" id="PTHR32194:SF2">
    <property type="entry name" value="PROTEASOME SUBUNIT BETA TYPE-1"/>
    <property type="match status" value="1"/>
</dbReference>
<dbReference type="Pfam" id="PF00227">
    <property type="entry name" value="Proteasome"/>
    <property type="match status" value="1"/>
</dbReference>
<dbReference type="SUPFAM" id="SSF56235">
    <property type="entry name" value="N-terminal nucleophile aminohydrolases (Ntn hydrolases)"/>
    <property type="match status" value="1"/>
</dbReference>
<dbReference type="PROSITE" id="PS00854">
    <property type="entry name" value="PROTEASOME_BETA_1"/>
    <property type="match status" value="1"/>
</dbReference>
<dbReference type="PROSITE" id="PS51476">
    <property type="entry name" value="PROTEASOME_BETA_2"/>
    <property type="match status" value="1"/>
</dbReference>
<name>PSB1_DROME</name>
<accession>P40304</accession>
<accession>Q9VV84</accession>
<keyword id="KW-0963">Cytoplasm</keyword>
<keyword id="KW-0539">Nucleus</keyword>
<keyword id="KW-0647">Proteasome</keyword>
<keyword id="KW-1185">Reference proteome</keyword>
<protein>
    <recommendedName>
        <fullName>Proteasome subunit beta type-1</fullName>
    </recommendedName>
    <alternativeName>
        <fullName>Proteasome 26 kDa subunit</fullName>
    </alternativeName>
</protein>
<reference key="1">
    <citation type="journal article" date="1993" name="Proc. Natl. Acad. Sci. U.S.A.">
        <title>Identification of an essential gene, l(3)73Ai, with a dominant temperature-sensitive lethal allele, encoding a Drosophila proteasome subunit.</title>
        <authorList>
            <person name="Saville K.J."/>
            <person name="Belote J.M."/>
        </authorList>
    </citation>
    <scope>NUCLEOTIDE SEQUENCE</scope>
</reference>
<reference key="2">
    <citation type="journal article" date="2000" name="Science">
        <title>The genome sequence of Drosophila melanogaster.</title>
        <authorList>
            <person name="Adams M.D."/>
            <person name="Celniker S.E."/>
            <person name="Holt R.A."/>
            <person name="Evans C.A."/>
            <person name="Gocayne J.D."/>
            <person name="Amanatides P.G."/>
            <person name="Scherer S.E."/>
            <person name="Li P.W."/>
            <person name="Hoskins R.A."/>
            <person name="Galle R.F."/>
            <person name="George R.A."/>
            <person name="Lewis S.E."/>
            <person name="Richards S."/>
            <person name="Ashburner M."/>
            <person name="Henderson S.N."/>
            <person name="Sutton G.G."/>
            <person name="Wortman J.R."/>
            <person name="Yandell M.D."/>
            <person name="Zhang Q."/>
            <person name="Chen L.X."/>
            <person name="Brandon R.C."/>
            <person name="Rogers Y.-H.C."/>
            <person name="Blazej R.G."/>
            <person name="Champe M."/>
            <person name="Pfeiffer B.D."/>
            <person name="Wan K.H."/>
            <person name="Doyle C."/>
            <person name="Baxter E.G."/>
            <person name="Helt G."/>
            <person name="Nelson C.R."/>
            <person name="Miklos G.L.G."/>
            <person name="Abril J.F."/>
            <person name="Agbayani A."/>
            <person name="An H.-J."/>
            <person name="Andrews-Pfannkoch C."/>
            <person name="Baldwin D."/>
            <person name="Ballew R.M."/>
            <person name="Basu A."/>
            <person name="Baxendale J."/>
            <person name="Bayraktaroglu L."/>
            <person name="Beasley E.M."/>
            <person name="Beeson K.Y."/>
            <person name="Benos P.V."/>
            <person name="Berman B.P."/>
            <person name="Bhandari D."/>
            <person name="Bolshakov S."/>
            <person name="Borkova D."/>
            <person name="Botchan M.R."/>
            <person name="Bouck J."/>
            <person name="Brokstein P."/>
            <person name="Brottier P."/>
            <person name="Burtis K.C."/>
            <person name="Busam D.A."/>
            <person name="Butler H."/>
            <person name="Cadieu E."/>
            <person name="Center A."/>
            <person name="Chandra I."/>
            <person name="Cherry J.M."/>
            <person name="Cawley S."/>
            <person name="Dahlke C."/>
            <person name="Davenport L.B."/>
            <person name="Davies P."/>
            <person name="de Pablos B."/>
            <person name="Delcher A."/>
            <person name="Deng Z."/>
            <person name="Mays A.D."/>
            <person name="Dew I."/>
            <person name="Dietz S.M."/>
            <person name="Dodson K."/>
            <person name="Doup L.E."/>
            <person name="Downes M."/>
            <person name="Dugan-Rocha S."/>
            <person name="Dunkov B.C."/>
            <person name="Dunn P."/>
            <person name="Durbin K.J."/>
            <person name="Evangelista C.C."/>
            <person name="Ferraz C."/>
            <person name="Ferriera S."/>
            <person name="Fleischmann W."/>
            <person name="Fosler C."/>
            <person name="Gabrielian A.E."/>
            <person name="Garg N.S."/>
            <person name="Gelbart W.M."/>
            <person name="Glasser K."/>
            <person name="Glodek A."/>
            <person name="Gong F."/>
            <person name="Gorrell J.H."/>
            <person name="Gu Z."/>
            <person name="Guan P."/>
            <person name="Harris M."/>
            <person name="Harris N.L."/>
            <person name="Harvey D.A."/>
            <person name="Heiman T.J."/>
            <person name="Hernandez J.R."/>
            <person name="Houck J."/>
            <person name="Hostin D."/>
            <person name="Houston K.A."/>
            <person name="Howland T.J."/>
            <person name="Wei M.-H."/>
            <person name="Ibegwam C."/>
            <person name="Jalali M."/>
            <person name="Kalush F."/>
            <person name="Karpen G.H."/>
            <person name="Ke Z."/>
            <person name="Kennison J.A."/>
            <person name="Ketchum K.A."/>
            <person name="Kimmel B.E."/>
            <person name="Kodira C.D."/>
            <person name="Kraft C.L."/>
            <person name="Kravitz S."/>
            <person name="Kulp D."/>
            <person name="Lai Z."/>
            <person name="Lasko P."/>
            <person name="Lei Y."/>
            <person name="Levitsky A.A."/>
            <person name="Li J.H."/>
            <person name="Li Z."/>
            <person name="Liang Y."/>
            <person name="Lin X."/>
            <person name="Liu X."/>
            <person name="Mattei B."/>
            <person name="McIntosh T.C."/>
            <person name="McLeod M.P."/>
            <person name="McPherson D."/>
            <person name="Merkulov G."/>
            <person name="Milshina N.V."/>
            <person name="Mobarry C."/>
            <person name="Morris J."/>
            <person name="Moshrefi A."/>
            <person name="Mount S.M."/>
            <person name="Moy M."/>
            <person name="Murphy B."/>
            <person name="Murphy L."/>
            <person name="Muzny D.M."/>
            <person name="Nelson D.L."/>
            <person name="Nelson D.R."/>
            <person name="Nelson K.A."/>
            <person name="Nixon K."/>
            <person name="Nusskern D.R."/>
            <person name="Pacleb J.M."/>
            <person name="Palazzolo M."/>
            <person name="Pittman G.S."/>
            <person name="Pan S."/>
            <person name="Pollard J."/>
            <person name="Puri V."/>
            <person name="Reese M.G."/>
            <person name="Reinert K."/>
            <person name="Remington K."/>
            <person name="Saunders R.D.C."/>
            <person name="Scheeler F."/>
            <person name="Shen H."/>
            <person name="Shue B.C."/>
            <person name="Siden-Kiamos I."/>
            <person name="Simpson M."/>
            <person name="Skupski M.P."/>
            <person name="Smith T.J."/>
            <person name="Spier E."/>
            <person name="Spradling A.C."/>
            <person name="Stapleton M."/>
            <person name="Strong R."/>
            <person name="Sun E."/>
            <person name="Svirskas R."/>
            <person name="Tector C."/>
            <person name="Turner R."/>
            <person name="Venter E."/>
            <person name="Wang A.H."/>
            <person name="Wang X."/>
            <person name="Wang Z.-Y."/>
            <person name="Wassarman D.A."/>
            <person name="Weinstock G.M."/>
            <person name="Weissenbach J."/>
            <person name="Williams S.M."/>
            <person name="Woodage T."/>
            <person name="Worley K.C."/>
            <person name="Wu D."/>
            <person name="Yang S."/>
            <person name="Yao Q.A."/>
            <person name="Ye J."/>
            <person name="Yeh R.-F."/>
            <person name="Zaveri J.S."/>
            <person name="Zhan M."/>
            <person name="Zhang G."/>
            <person name="Zhao Q."/>
            <person name="Zheng L."/>
            <person name="Zheng X.H."/>
            <person name="Zhong F.N."/>
            <person name="Zhong W."/>
            <person name="Zhou X."/>
            <person name="Zhu S.C."/>
            <person name="Zhu X."/>
            <person name="Smith H.O."/>
            <person name="Gibbs R.A."/>
            <person name="Myers E.W."/>
            <person name="Rubin G.M."/>
            <person name="Venter J.C."/>
        </authorList>
    </citation>
    <scope>NUCLEOTIDE SEQUENCE [LARGE SCALE GENOMIC DNA]</scope>
    <source>
        <strain>Berkeley</strain>
    </source>
</reference>
<reference key="3">
    <citation type="journal article" date="2002" name="Genome Biol.">
        <title>Annotation of the Drosophila melanogaster euchromatic genome: a systematic review.</title>
        <authorList>
            <person name="Misra S."/>
            <person name="Crosby M.A."/>
            <person name="Mungall C.J."/>
            <person name="Matthews B.B."/>
            <person name="Campbell K.S."/>
            <person name="Hradecky P."/>
            <person name="Huang Y."/>
            <person name="Kaminker J.S."/>
            <person name="Millburn G.H."/>
            <person name="Prochnik S.E."/>
            <person name="Smith C.D."/>
            <person name="Tupy J.L."/>
            <person name="Whitfield E.J."/>
            <person name="Bayraktaroglu L."/>
            <person name="Berman B.P."/>
            <person name="Bettencourt B.R."/>
            <person name="Celniker S.E."/>
            <person name="de Grey A.D.N.J."/>
            <person name="Drysdale R.A."/>
            <person name="Harris N.L."/>
            <person name="Richter J."/>
            <person name="Russo S."/>
            <person name="Schroeder A.J."/>
            <person name="Shu S.Q."/>
            <person name="Stapleton M."/>
            <person name="Yamada C."/>
            <person name="Ashburner M."/>
            <person name="Gelbart W.M."/>
            <person name="Rubin G.M."/>
            <person name="Lewis S.E."/>
        </authorList>
    </citation>
    <scope>GENOME REANNOTATION</scope>
    <source>
        <strain>Berkeley</strain>
    </source>
</reference>
<reference key="4">
    <citation type="journal article" date="2002" name="Genome Biol.">
        <title>A Drosophila full-length cDNA resource.</title>
        <authorList>
            <person name="Stapleton M."/>
            <person name="Carlson J.W."/>
            <person name="Brokstein P."/>
            <person name="Yu C."/>
            <person name="Champe M."/>
            <person name="George R.A."/>
            <person name="Guarin H."/>
            <person name="Kronmiller B."/>
            <person name="Pacleb J.M."/>
            <person name="Park S."/>
            <person name="Wan K.H."/>
            <person name="Rubin G.M."/>
            <person name="Celniker S.E."/>
        </authorList>
    </citation>
    <scope>NUCLEOTIDE SEQUENCE [LARGE SCALE MRNA]</scope>
    <source>
        <strain>Berkeley</strain>
        <tissue>Embryo</tissue>
    </source>
</reference>
<organism>
    <name type="scientific">Drosophila melanogaster</name>
    <name type="common">Fruit fly</name>
    <dbReference type="NCBI Taxonomy" id="7227"/>
    <lineage>
        <taxon>Eukaryota</taxon>
        <taxon>Metazoa</taxon>
        <taxon>Ecdysozoa</taxon>
        <taxon>Arthropoda</taxon>
        <taxon>Hexapoda</taxon>
        <taxon>Insecta</taxon>
        <taxon>Pterygota</taxon>
        <taxon>Neoptera</taxon>
        <taxon>Endopterygota</taxon>
        <taxon>Diptera</taxon>
        <taxon>Brachycera</taxon>
        <taxon>Muscomorpha</taxon>
        <taxon>Ephydroidea</taxon>
        <taxon>Drosophilidae</taxon>
        <taxon>Drosophila</taxon>
        <taxon>Sophophora</taxon>
    </lineage>
</organism>
<feature type="propeptide" id="PRO_0000259626" evidence="1">
    <location>
        <begin position="1"/>
        <end position="20"/>
    </location>
</feature>
<feature type="chain" id="PRO_0000148036" description="Proteasome subunit beta type-1">
    <location>
        <begin position="21"/>
        <end position="235"/>
    </location>
</feature>
<feature type="sequence conflict" description="In Ref. 1; AAC46465." evidence="3" ref="1">
    <original>R</original>
    <variation>W</variation>
    <location>
        <position position="192"/>
    </location>
</feature>
<evidence type="ECO:0000250" key="1"/>
<evidence type="ECO:0000255" key="2">
    <source>
        <dbReference type="PROSITE-ProRule" id="PRU00809"/>
    </source>
</evidence>
<evidence type="ECO:0000305" key="3"/>
<sequence>MSRLGFEQFPDYQVPGMKHPDFSPYESNGGSIVAIAGDDFAVIAADTRLSSGYNIHSRTQSKLFKLSPQTVLGSAGCWADTLSLTGSIKVRMQSYEHTHLRTMTTEAVAQMLSIAMYNRRFFPYYVSNILAGIDNEGKGVVYSYDPIGHCEKATYRAGGTAGTLLQPVLDNQIGHKNMNLEDADKIKLTKERAVSVASDTFISAAERDIYTGDSVLINIITKDGIEVRTLTLRQD</sequence>
<comment type="function">
    <text>Non-catalytic component of the proteasome, a multicatalytic proteinase complex which is characterized by its ability to cleave peptides with Arg, Phe, Tyr, Leu, and Glu adjacent to the leaving group at neutral or slightly basic pH. The proteasome has an ATP-dependent proteolytic activity.</text>
</comment>
<comment type="subunit">
    <text evidence="1">The 26S proteasome consists of a 20S proteasome core and two 19S regulatory subunits. The 20S proteasome core is composed of 28 subunits that are arranged in four stacked rings, resulting in a barrel-shaped structure. The two end rings are each formed by seven alpha subunits, and the two central rings are each formed by seven beta subunits. The catalytic chamber with the active sites is on the inside of the barrel (By similarity).</text>
</comment>
<comment type="subcellular location">
    <subcellularLocation>
        <location evidence="2">Cytoplasm</location>
    </subcellularLocation>
    <subcellularLocation>
        <location evidence="1">Nucleus</location>
    </subcellularLocation>
</comment>
<comment type="similarity">
    <text evidence="2">Belongs to the peptidase T1B family.</text>
</comment>
<gene>
    <name type="primary">Prosbeta6</name>
    <name type="synonym">l(3)73Ai</name>
    <name type="synonym">PROS-26</name>
    <name type="synonym">Pros26</name>
    <name type="ORF">CG4097</name>
</gene>